<comment type="cofactor">
    <cofactor evidence="1">
        <name>Zn(2+)</name>
        <dbReference type="ChEBI" id="CHEBI:29105"/>
    </cofactor>
    <text evidence="1">Binds 3 Zn(2+) ions per subunit.</text>
</comment>
<comment type="subunit">
    <text evidence="1">Homotrimer.</text>
</comment>
<comment type="similarity">
    <text evidence="1">Belongs to the PHP family.</text>
</comment>
<organism>
    <name type="scientific">Escherichia coli O127:H6 (strain E2348/69 / EPEC)</name>
    <dbReference type="NCBI Taxonomy" id="574521"/>
    <lineage>
        <taxon>Bacteria</taxon>
        <taxon>Pseudomonadati</taxon>
        <taxon>Pseudomonadota</taxon>
        <taxon>Gammaproteobacteria</taxon>
        <taxon>Enterobacterales</taxon>
        <taxon>Enterobacteriaceae</taxon>
        <taxon>Escherichia</taxon>
    </lineage>
</organism>
<protein>
    <recommendedName>
        <fullName evidence="1">Probable phosphatase YcdX</fullName>
        <ecNumber evidence="1">3.1.3.-</ecNumber>
    </recommendedName>
</protein>
<evidence type="ECO:0000255" key="1">
    <source>
        <dbReference type="HAMAP-Rule" id="MF_01561"/>
    </source>
</evidence>
<name>YCDX_ECO27</name>
<gene>
    <name evidence="1" type="primary">ycdX</name>
    <name type="ordered locus">E2348C_1124</name>
</gene>
<proteinExistence type="inferred from homology"/>
<accession>B7UP48</accession>
<sequence length="245" mass="26921">MYPVDLHMHTVASTHAYSTLSDYIAQAKQKGIKLFAITDHGPDMEDAPHHWHFINMRIWPRVVDGVGILRGIEANIKNVDGEIDCSGKMFDSLDLIIAGFHEPVFAPHDKATNTKAMIATIASGNVHIISHPGNPRYPIDFKAVSEAAVKHQVALEINNSSFLHSRKGSEDNCRAVAAAVRDAGGWVALGSDSHTAFTMGEFEECLKILDAVDFPPERILNVSPRRLLNFLESRGMAPIAEFADL</sequence>
<reference key="1">
    <citation type="journal article" date="2009" name="J. Bacteriol.">
        <title>Complete genome sequence and comparative genome analysis of enteropathogenic Escherichia coli O127:H6 strain E2348/69.</title>
        <authorList>
            <person name="Iguchi A."/>
            <person name="Thomson N.R."/>
            <person name="Ogura Y."/>
            <person name="Saunders D."/>
            <person name="Ooka T."/>
            <person name="Henderson I.R."/>
            <person name="Harris D."/>
            <person name="Asadulghani M."/>
            <person name="Kurokawa K."/>
            <person name="Dean P."/>
            <person name="Kenny B."/>
            <person name="Quail M.A."/>
            <person name="Thurston S."/>
            <person name="Dougan G."/>
            <person name="Hayashi T."/>
            <person name="Parkhill J."/>
            <person name="Frankel G."/>
        </authorList>
    </citation>
    <scope>NUCLEOTIDE SEQUENCE [LARGE SCALE GENOMIC DNA]</scope>
    <source>
        <strain>E2348/69 / EPEC</strain>
    </source>
</reference>
<keyword id="KW-0378">Hydrolase</keyword>
<keyword id="KW-0479">Metal-binding</keyword>
<keyword id="KW-1185">Reference proteome</keyword>
<keyword id="KW-0862">Zinc</keyword>
<dbReference type="EC" id="3.1.3.-" evidence="1"/>
<dbReference type="EMBL" id="FM180568">
    <property type="protein sequence ID" value="CAS08672.1"/>
    <property type="molecule type" value="Genomic_DNA"/>
</dbReference>
<dbReference type="RefSeq" id="WP_000283657.1">
    <property type="nucleotide sequence ID" value="NC_011601.1"/>
</dbReference>
<dbReference type="SMR" id="B7UP48"/>
<dbReference type="KEGG" id="ecg:E2348C_1124"/>
<dbReference type="HOGENOM" id="CLU_061999_0_1_6"/>
<dbReference type="Proteomes" id="UP000008205">
    <property type="component" value="Chromosome"/>
</dbReference>
<dbReference type="GO" id="GO:0005829">
    <property type="term" value="C:cytosol"/>
    <property type="evidence" value="ECO:0007669"/>
    <property type="project" value="TreeGrafter"/>
</dbReference>
<dbReference type="GO" id="GO:0016791">
    <property type="term" value="F:phosphatase activity"/>
    <property type="evidence" value="ECO:0007669"/>
    <property type="project" value="UniProtKB-UniRule"/>
</dbReference>
<dbReference type="GO" id="GO:0008270">
    <property type="term" value="F:zinc ion binding"/>
    <property type="evidence" value="ECO:0007669"/>
    <property type="project" value="UniProtKB-UniRule"/>
</dbReference>
<dbReference type="GO" id="GO:0071978">
    <property type="term" value="P:bacterial-type flagellum-dependent swarming motility"/>
    <property type="evidence" value="ECO:0007669"/>
    <property type="project" value="TreeGrafter"/>
</dbReference>
<dbReference type="CDD" id="cd07437">
    <property type="entry name" value="PHP_HisPPase_Ycdx_like"/>
    <property type="match status" value="1"/>
</dbReference>
<dbReference type="FunFam" id="3.20.20.140:FF:000008">
    <property type="entry name" value="Probable phosphatase YcdX"/>
    <property type="match status" value="1"/>
</dbReference>
<dbReference type="Gene3D" id="3.20.20.140">
    <property type="entry name" value="Metal-dependent hydrolases"/>
    <property type="match status" value="1"/>
</dbReference>
<dbReference type="HAMAP" id="MF_01561">
    <property type="entry name" value="YcdX_phosphat"/>
    <property type="match status" value="1"/>
</dbReference>
<dbReference type="InterPro" id="IPR023710">
    <property type="entry name" value="Phosphatase_YcdX_put"/>
</dbReference>
<dbReference type="InterPro" id="IPR004013">
    <property type="entry name" value="PHP_dom"/>
</dbReference>
<dbReference type="InterPro" id="IPR050243">
    <property type="entry name" value="PHP_phosphatase"/>
</dbReference>
<dbReference type="InterPro" id="IPR003141">
    <property type="entry name" value="Pol/His_phosphatase_N"/>
</dbReference>
<dbReference type="InterPro" id="IPR016195">
    <property type="entry name" value="Pol/histidinol_Pase-like"/>
</dbReference>
<dbReference type="NCBIfam" id="NF006702">
    <property type="entry name" value="PRK09248.1"/>
    <property type="match status" value="1"/>
</dbReference>
<dbReference type="PANTHER" id="PTHR36928">
    <property type="entry name" value="PHOSPHATASE YCDX-RELATED"/>
    <property type="match status" value="1"/>
</dbReference>
<dbReference type="PANTHER" id="PTHR36928:SF1">
    <property type="entry name" value="PHOSPHATASE YCDX-RELATED"/>
    <property type="match status" value="1"/>
</dbReference>
<dbReference type="Pfam" id="PF02811">
    <property type="entry name" value="PHP"/>
    <property type="match status" value="1"/>
</dbReference>
<dbReference type="SMART" id="SM00481">
    <property type="entry name" value="POLIIIAc"/>
    <property type="match status" value="1"/>
</dbReference>
<dbReference type="SUPFAM" id="SSF89550">
    <property type="entry name" value="PHP domain-like"/>
    <property type="match status" value="1"/>
</dbReference>
<feature type="chain" id="PRO_1000185430" description="Probable phosphatase YcdX">
    <location>
        <begin position="1"/>
        <end position="245"/>
    </location>
</feature>
<feature type="binding site" evidence="1">
    <location>
        <position position="7"/>
    </location>
    <ligand>
        <name>Zn(2+)</name>
        <dbReference type="ChEBI" id="CHEBI:29105"/>
        <label>1</label>
    </ligand>
</feature>
<feature type="binding site" evidence="1">
    <location>
        <position position="9"/>
    </location>
    <ligand>
        <name>Zn(2+)</name>
        <dbReference type="ChEBI" id="CHEBI:29105"/>
        <label>1</label>
    </ligand>
</feature>
<feature type="binding site" evidence="1">
    <location>
        <position position="15"/>
    </location>
    <ligand>
        <name>Zn(2+)</name>
        <dbReference type="ChEBI" id="CHEBI:29105"/>
        <label>2</label>
    </ligand>
</feature>
<feature type="binding site" evidence="1">
    <location>
        <position position="40"/>
    </location>
    <ligand>
        <name>Zn(2+)</name>
        <dbReference type="ChEBI" id="CHEBI:29105"/>
        <label>2</label>
    </ligand>
</feature>
<feature type="binding site" evidence="1">
    <location>
        <position position="73"/>
    </location>
    <ligand>
        <name>Zn(2+)</name>
        <dbReference type="ChEBI" id="CHEBI:29105"/>
        <label>1</label>
    </ligand>
</feature>
<feature type="binding site" evidence="1">
    <location>
        <position position="73"/>
    </location>
    <ligand>
        <name>Zn(2+)</name>
        <dbReference type="ChEBI" id="CHEBI:29105"/>
        <label>3</label>
    </ligand>
</feature>
<feature type="binding site" evidence="1">
    <location>
        <position position="101"/>
    </location>
    <ligand>
        <name>Zn(2+)</name>
        <dbReference type="ChEBI" id="CHEBI:29105"/>
        <label>3</label>
    </ligand>
</feature>
<feature type="binding site" evidence="1">
    <location>
        <position position="131"/>
    </location>
    <ligand>
        <name>Zn(2+)</name>
        <dbReference type="ChEBI" id="CHEBI:29105"/>
        <label>3</label>
    </ligand>
</feature>
<feature type="binding site" evidence="1">
    <location>
        <position position="192"/>
    </location>
    <ligand>
        <name>Zn(2+)</name>
        <dbReference type="ChEBI" id="CHEBI:29105"/>
        <label>1</label>
    </ligand>
</feature>
<feature type="binding site" evidence="1">
    <location>
        <position position="194"/>
    </location>
    <ligand>
        <name>Zn(2+)</name>
        <dbReference type="ChEBI" id="CHEBI:29105"/>
        <label>2</label>
    </ligand>
</feature>